<reference key="1">
    <citation type="submission" date="1996-12" db="EMBL/GenBank/DDBJ databases">
        <title>Cloning of the Xenopus homologue of ICE.</title>
        <authorList>
            <person name="Nakajima K."/>
        </authorList>
    </citation>
    <scope>NUCLEOTIDE SEQUENCE [MRNA]</scope>
</reference>
<accession>P55867</accession>
<evidence type="ECO:0000250" key="1">
    <source>
        <dbReference type="UniProtKB" id="P29466"/>
    </source>
</evidence>
<evidence type="ECO:0000255" key="2"/>
<evidence type="ECO:0000305" key="3"/>
<dbReference type="EC" id="3.4.22.36" evidence="1"/>
<dbReference type="EMBL" id="D89785">
    <property type="protein sequence ID" value="BAA14019.1"/>
    <property type="molecule type" value="mRNA"/>
</dbReference>
<dbReference type="RefSeq" id="NP_001079341.1">
    <property type="nucleotide sequence ID" value="NM_001085872.1"/>
</dbReference>
<dbReference type="SMR" id="P55867"/>
<dbReference type="GeneID" id="378669"/>
<dbReference type="KEGG" id="xla:378669"/>
<dbReference type="AGR" id="Xenbase:XB-GENE-6077552"/>
<dbReference type="CTD" id="378669"/>
<dbReference type="Xenbase" id="XB-GENE-6077552">
    <property type="gene designation" value="casp1.S"/>
</dbReference>
<dbReference type="OrthoDB" id="6097640at2759"/>
<dbReference type="Proteomes" id="UP000186698">
    <property type="component" value="Chromosome 2S"/>
</dbReference>
<dbReference type="Bgee" id="378669">
    <property type="expression patterns" value="Expressed in liver and 9 other cell types or tissues"/>
</dbReference>
<dbReference type="GO" id="GO:0097169">
    <property type="term" value="C:AIM2 inflammasome complex"/>
    <property type="evidence" value="ECO:0000318"/>
    <property type="project" value="GO_Central"/>
</dbReference>
<dbReference type="GO" id="GO:0072557">
    <property type="term" value="C:IPAF inflammasome complex"/>
    <property type="evidence" value="ECO:0000318"/>
    <property type="project" value="GO_Central"/>
</dbReference>
<dbReference type="GO" id="GO:0072559">
    <property type="term" value="C:NLRP3 inflammasome complex"/>
    <property type="evidence" value="ECO:0000318"/>
    <property type="project" value="GO_Central"/>
</dbReference>
<dbReference type="GO" id="GO:0005886">
    <property type="term" value="C:plasma membrane"/>
    <property type="evidence" value="ECO:0007669"/>
    <property type="project" value="UniProtKB-SubCell"/>
</dbReference>
<dbReference type="GO" id="GO:0004197">
    <property type="term" value="F:cysteine-type endopeptidase activity"/>
    <property type="evidence" value="ECO:0000250"/>
    <property type="project" value="UniProtKB"/>
</dbReference>
<dbReference type="GO" id="GO:0001819">
    <property type="term" value="P:positive regulation of cytokine production"/>
    <property type="evidence" value="ECO:0000250"/>
    <property type="project" value="UniProtKB"/>
</dbReference>
<dbReference type="GO" id="GO:0032731">
    <property type="term" value="P:positive regulation of interleukin-1 beta production"/>
    <property type="evidence" value="ECO:0000250"/>
    <property type="project" value="UniProtKB"/>
</dbReference>
<dbReference type="GO" id="GO:0016540">
    <property type="term" value="P:protein autoprocessing"/>
    <property type="evidence" value="ECO:0000250"/>
    <property type="project" value="UniProtKB"/>
</dbReference>
<dbReference type="GO" id="GO:0070269">
    <property type="term" value="P:pyroptotic inflammatory response"/>
    <property type="evidence" value="ECO:0000250"/>
    <property type="project" value="UniProtKB"/>
</dbReference>
<dbReference type="GO" id="GO:0042981">
    <property type="term" value="P:regulation of apoptotic process"/>
    <property type="evidence" value="ECO:0007669"/>
    <property type="project" value="InterPro"/>
</dbReference>
<dbReference type="GO" id="GO:0050727">
    <property type="term" value="P:regulation of inflammatory response"/>
    <property type="evidence" value="ECO:0000250"/>
    <property type="project" value="UniProtKB"/>
</dbReference>
<dbReference type="CDD" id="cd00032">
    <property type="entry name" value="CASc"/>
    <property type="match status" value="1"/>
</dbReference>
<dbReference type="FunFam" id="3.40.50.1460:FF:000007">
    <property type="entry name" value="Caspase-1"/>
    <property type="match status" value="1"/>
</dbReference>
<dbReference type="Gene3D" id="3.40.50.1460">
    <property type="match status" value="1"/>
</dbReference>
<dbReference type="Gene3D" id="1.10.533.10">
    <property type="entry name" value="Death Domain, Fas"/>
    <property type="match status" value="1"/>
</dbReference>
<dbReference type="InterPro" id="IPR001315">
    <property type="entry name" value="CARD"/>
</dbReference>
<dbReference type="InterPro" id="IPR029030">
    <property type="entry name" value="Caspase-like_dom_sf"/>
</dbReference>
<dbReference type="InterPro" id="IPR033139">
    <property type="entry name" value="Caspase_cys_AS"/>
</dbReference>
<dbReference type="InterPro" id="IPR016129">
    <property type="entry name" value="Caspase_his_AS"/>
</dbReference>
<dbReference type="InterPro" id="IPR011029">
    <property type="entry name" value="DEATH-like_dom_sf"/>
</dbReference>
<dbReference type="InterPro" id="IPR002398">
    <property type="entry name" value="Pept_C14"/>
</dbReference>
<dbReference type="InterPro" id="IPR011600">
    <property type="entry name" value="Pept_C14_caspase"/>
</dbReference>
<dbReference type="InterPro" id="IPR002138">
    <property type="entry name" value="Pept_C14_p10"/>
</dbReference>
<dbReference type="InterPro" id="IPR001309">
    <property type="entry name" value="Pept_C14_p20"/>
</dbReference>
<dbReference type="InterPro" id="IPR015917">
    <property type="entry name" value="Pept_C14A"/>
</dbReference>
<dbReference type="PANTHER" id="PTHR47901">
    <property type="entry name" value="CASPASE RECRUITMENT DOMAIN-CONTAINING PROTEIN 18"/>
    <property type="match status" value="1"/>
</dbReference>
<dbReference type="PANTHER" id="PTHR47901:SF3">
    <property type="entry name" value="CASPASE-1"/>
    <property type="match status" value="1"/>
</dbReference>
<dbReference type="Pfam" id="PF00619">
    <property type="entry name" value="CARD"/>
    <property type="match status" value="1"/>
</dbReference>
<dbReference type="Pfam" id="PF00656">
    <property type="entry name" value="Peptidase_C14"/>
    <property type="match status" value="1"/>
</dbReference>
<dbReference type="PIRSF" id="PIRSF038001">
    <property type="entry name" value="Caspase_ICE"/>
    <property type="match status" value="1"/>
</dbReference>
<dbReference type="PRINTS" id="PR00376">
    <property type="entry name" value="IL1BCENZYME"/>
</dbReference>
<dbReference type="SMART" id="SM00114">
    <property type="entry name" value="CARD"/>
    <property type="match status" value="1"/>
</dbReference>
<dbReference type="SMART" id="SM00115">
    <property type="entry name" value="CASc"/>
    <property type="match status" value="1"/>
</dbReference>
<dbReference type="SUPFAM" id="SSF52129">
    <property type="entry name" value="Caspase-like"/>
    <property type="match status" value="1"/>
</dbReference>
<dbReference type="SUPFAM" id="SSF47986">
    <property type="entry name" value="DEATH domain"/>
    <property type="match status" value="1"/>
</dbReference>
<dbReference type="PROSITE" id="PS50209">
    <property type="entry name" value="CARD"/>
    <property type="match status" value="1"/>
</dbReference>
<dbReference type="PROSITE" id="PS01122">
    <property type="entry name" value="CASPASE_CYS"/>
    <property type="match status" value="1"/>
</dbReference>
<dbReference type="PROSITE" id="PS01121">
    <property type="entry name" value="CASPASE_HIS"/>
    <property type="match status" value="1"/>
</dbReference>
<dbReference type="PROSITE" id="PS50207">
    <property type="entry name" value="CASPASE_P10"/>
    <property type="match status" value="1"/>
</dbReference>
<dbReference type="PROSITE" id="PS50208">
    <property type="entry name" value="CASPASE_P20"/>
    <property type="match status" value="1"/>
</dbReference>
<name>CAS1B_XENLA</name>
<protein>
    <recommendedName>
        <fullName>Caspase-1-B</fullName>
        <shortName>CASP-1-B</shortName>
        <ecNumber evidence="1">3.4.22.36</ecNumber>
    </recommendedName>
    <alternativeName>
        <fullName>Interleukin-1 beta convertase homolog B</fullName>
        <shortName>xICE-B</shortName>
    </alternativeName>
    <component>
        <recommendedName>
            <fullName evidence="1">Caspase-1 subunit p20</fullName>
        </recommendedName>
    </component>
    <component>
        <recommendedName>
            <fullName evidence="1">Caspase-1 subunit p10</fullName>
        </recommendedName>
    </component>
</protein>
<comment type="function">
    <text evidence="1">Thiol protease involved in a variety of inflammatory processes by proteolytically cleaving other proteins, such as the precursors of the inflammatory cytokines interleukin-1 beta (IL1B) and interleukin 18 (IL18) as well as the pyroptosis inducer Gasdermin-D (GSDMD), into active mature peptides. Plays a key role in cell immunity as an inflammatory response initiator: once activated through formation of an inflammasome complex, it initiates a pro-inflammatory response through the cleavage of the two inflammatory cytokines IL1B and IL18, releasing the mature cytokines which are involved in a variety of inflammatory processes. Cleaves a tetrapeptide after an Asp residue at position P1. Also initiates pyroptosis, a programmed lytic cell death pathway, through cleavage of GSDMD.</text>
</comment>
<comment type="catalytic activity">
    <reaction evidence="1">
        <text>Strict requirement for an Asp residue at position P1 and has a preferred cleavage sequence of Tyr-Val-Ala-Asp-|-.</text>
        <dbReference type="EC" id="3.4.22.36"/>
    </reaction>
</comment>
<comment type="subunit">
    <text evidence="1">Heterotetramer that consists of two anti-parallel arranged heterodimers, each one formed by a 20 kDa (Caspase-1 subunit p20) and a 10 kDa (Caspase-1 subunit p10) subunit.</text>
</comment>
<comment type="subunit">
    <molecule>Caspase-1 subunit p20</molecule>
    <text evidence="1">Heterotetramer that consists of two anti-parallel arranged heterodimers, each one formed by a 20 kDa (Caspase-1 subunit p20) and a 10 kDa (Caspase-1 subunit p10) subunit. Can form a heterodimer with isoform epsilon which then has an inhibitory effect.</text>
</comment>
<comment type="subunit">
    <molecule>Caspase-1 subunit p10</molecule>
    <text evidence="1">Heterotetramer that consists of two anti-parallel arranged heterodimers, each one formed by a 20 kDa (Caspase-1 subunit p20) and a 10 kDa (Caspase-1 subunit p10) subunit.</text>
</comment>
<comment type="subcellular location">
    <subcellularLocation>
        <location evidence="1">Cytoplasm</location>
    </subcellularLocation>
    <subcellularLocation>
        <location evidence="1">Cell membrane</location>
    </subcellularLocation>
</comment>
<comment type="PTM">
    <text evidence="1">The two subunits are derived from the precursor sequence by an autocatalytic mechanism.</text>
</comment>
<comment type="similarity">
    <text evidence="3">Belongs to the peptidase C14A family.</text>
</comment>
<proteinExistence type="evidence at transcript level"/>
<organism>
    <name type="scientific">Xenopus laevis</name>
    <name type="common">African clawed frog</name>
    <dbReference type="NCBI Taxonomy" id="8355"/>
    <lineage>
        <taxon>Eukaryota</taxon>
        <taxon>Metazoa</taxon>
        <taxon>Chordata</taxon>
        <taxon>Craniata</taxon>
        <taxon>Vertebrata</taxon>
        <taxon>Euteleostomi</taxon>
        <taxon>Amphibia</taxon>
        <taxon>Batrachia</taxon>
        <taxon>Anura</taxon>
        <taxon>Pipoidea</taxon>
        <taxon>Pipidae</taxon>
        <taxon>Xenopodinae</taxon>
        <taxon>Xenopus</taxon>
        <taxon>Xenopus</taxon>
    </lineage>
</organism>
<sequence length="382" mass="43389">MTAQLNKVRKAIINGCNPAMISDLLDDLQDKHVLKDYEVEHINKKNNTSRDRCRDMIDSVKKKGEYSSNILLESLVKNHKTLAESLGLHEHAPSPIQEHNEDTIKDKEINSVIPCSAEEFKNIYDSHGDKIYEVREREGRKRLALIICNETFQSMSERRGAKLDLEGMNKLLNELGYQVQQHTNLTKAEMVKAMKEFAAREEHADSDSTFIVLMSHGDKPGVCGTDSKKTENGQYGVTNLLQVDEIFSTFNNVNCSRLWDKPKVIIIQACRGENQGGELVRDDVAPAPLEDDAVHHVQTETDSICFYSSTPDTASWRNPTKGSVFIIRLIEKMNELAHCQPLGDIFLEVQSSFKDKSPNQYSQMPTQERSTMTKKFYLFPGY</sequence>
<keyword id="KW-1003">Cell membrane</keyword>
<keyword id="KW-0963">Cytoplasm</keyword>
<keyword id="KW-0378">Hydrolase</keyword>
<keyword id="KW-0472">Membrane</keyword>
<keyword id="KW-0645">Protease</keyword>
<keyword id="KW-1185">Reference proteome</keyword>
<keyword id="KW-0788">Thiol protease</keyword>
<keyword id="KW-0865">Zymogen</keyword>
<gene>
    <name type="primary">casp1-b</name>
    <name type="synonym">casp1b</name>
</gene>
<feature type="propeptide" id="PRO_0000004539" evidence="2">
    <location>
        <begin position="1"/>
        <end position="98"/>
    </location>
</feature>
<feature type="chain" id="PRO_0000451689" description="Caspase-1 subunit p20" evidence="1">
    <location>
        <begin position="99"/>
        <end position="282"/>
    </location>
</feature>
<feature type="propeptide" id="PRO_0000451690" evidence="1">
    <location>
        <begin position="283"/>
        <end position="292"/>
    </location>
</feature>
<feature type="chain" id="PRO_0000451691" description="Caspase-1 subunit p10" evidence="1">
    <location>
        <begin position="293"/>
        <end position="382"/>
    </location>
</feature>
<feature type="active site" evidence="1">
    <location>
        <position position="216"/>
    </location>
</feature>
<feature type="active site" evidence="1">
    <location>
        <position position="270"/>
    </location>
</feature>